<comment type="function">
    <text evidence="1">Usually encoded in the trnK tRNA gene intron. Probably assists in splicing its own and other chloroplast group II introns.</text>
</comment>
<comment type="subcellular location">
    <subcellularLocation>
        <location>Plastid</location>
        <location>Chloroplast</location>
    </subcellularLocation>
</comment>
<comment type="similarity">
    <text evidence="1">Belongs to the intron maturase 2 family. MatK subfamily.</text>
</comment>
<geneLocation type="chloroplast"/>
<sequence length="499" mass="59766">MEEFQVYLELDRSRQHDFLYPLIFREYIYALAYDHGLNSSILVQNXGYDNKSSLLIVKRLITRMYQQNHLIISANDSNKNPFWGYNKNLYSQIISEGLAVSVEIPFSLQLISSLEKAEIIKSYNLRSIHSIFPFFEEKFPYLNYVSDVQIPYPIHLEILIQSLRYWVKDASSFHLLRLFLYEYCNWNSLITPKKRISTFSKRNPXFXLXLYNFYVCEYXSIFLFLRNKSSYLRLTSSGVLFERIYFYAKIXHFVKVFDKDFLSTLWFFKDPFIHYVRYQGKSILASKNTPFLMKKWKYYLIHLWQCHFFVWSQPGKIHINQLSEHSFYFLGYFSNVRINPSVVRSQMLEKSFIMENLMKKLDTIIPIIPLIRSLAKAKFCNILGHPISKPVWADSSDFDIIDRFLQICRNLSHYYNGSSKKKSLYRIKYILRLSCIKTLARKHKSTVRVFLKRLGSELLEEFFTEEEDIFSLIFSRASSTLQKLYRGRIWYLDIFDFHQ</sequence>
<gene>
    <name evidence="1" type="primary">matK</name>
</gene>
<reference key="1">
    <citation type="journal article" date="2004" name="Nature">
        <title>Evolutionary change from induced to constitutive expression of an indirect plant resistance.</title>
        <authorList>
            <person name="Heil M."/>
            <person name="Greiner S."/>
            <person name="Meimberg H."/>
            <person name="Kruger R."/>
            <person name="Noyer J.L."/>
            <person name="Heubl G."/>
            <person name="Eduard Linsenmair K."/>
            <person name="Boland W."/>
        </authorList>
    </citation>
    <scope>NUCLEOTIDE SEQUENCE [GENOMIC DNA]</scope>
</reference>
<accession>Q6E4Q8</accession>
<feature type="chain" id="PRO_0000143651" description="Maturase K">
    <location>
        <begin position="1"/>
        <end position="499"/>
    </location>
</feature>
<name>MATK_NELJU</name>
<proteinExistence type="inferred from homology"/>
<protein>
    <recommendedName>
        <fullName evidence="1">Maturase K</fullName>
    </recommendedName>
    <alternativeName>
        <fullName evidence="1">Intron maturase</fullName>
    </alternativeName>
</protein>
<organism>
    <name type="scientific">Neltuma juliflora</name>
    <name type="common">Mesquite</name>
    <name type="synonym">Prosopis juliflora</name>
    <dbReference type="NCBI Taxonomy" id="3128859"/>
    <lineage>
        <taxon>Eukaryota</taxon>
        <taxon>Viridiplantae</taxon>
        <taxon>Streptophyta</taxon>
        <taxon>Embryophyta</taxon>
        <taxon>Tracheophyta</taxon>
        <taxon>Spermatophyta</taxon>
        <taxon>Magnoliopsida</taxon>
        <taxon>eudicotyledons</taxon>
        <taxon>Gunneridae</taxon>
        <taxon>Pentapetalae</taxon>
        <taxon>rosids</taxon>
        <taxon>fabids</taxon>
        <taxon>Fabales</taxon>
        <taxon>Fabaceae</taxon>
        <taxon>Caesalpinioideae</taxon>
        <taxon>mimosoid clade</taxon>
        <taxon>Acacieae</taxon>
        <taxon>Neltuma</taxon>
    </lineage>
</organism>
<keyword id="KW-0150">Chloroplast</keyword>
<keyword id="KW-0507">mRNA processing</keyword>
<keyword id="KW-0934">Plastid</keyword>
<keyword id="KW-0694">RNA-binding</keyword>
<keyword id="KW-0819">tRNA processing</keyword>
<dbReference type="EMBL" id="AY574098">
    <property type="protein sequence ID" value="AAT72733.1"/>
    <property type="molecule type" value="Genomic_DNA"/>
</dbReference>
<dbReference type="GO" id="GO:0009507">
    <property type="term" value="C:chloroplast"/>
    <property type="evidence" value="ECO:0007669"/>
    <property type="project" value="UniProtKB-SubCell"/>
</dbReference>
<dbReference type="GO" id="GO:0003723">
    <property type="term" value="F:RNA binding"/>
    <property type="evidence" value="ECO:0007669"/>
    <property type="project" value="UniProtKB-KW"/>
</dbReference>
<dbReference type="GO" id="GO:0006397">
    <property type="term" value="P:mRNA processing"/>
    <property type="evidence" value="ECO:0007669"/>
    <property type="project" value="UniProtKB-KW"/>
</dbReference>
<dbReference type="GO" id="GO:0008380">
    <property type="term" value="P:RNA splicing"/>
    <property type="evidence" value="ECO:0007669"/>
    <property type="project" value="UniProtKB-UniRule"/>
</dbReference>
<dbReference type="GO" id="GO:0008033">
    <property type="term" value="P:tRNA processing"/>
    <property type="evidence" value="ECO:0007669"/>
    <property type="project" value="UniProtKB-KW"/>
</dbReference>
<dbReference type="HAMAP" id="MF_01390">
    <property type="entry name" value="MatK"/>
    <property type="match status" value="1"/>
</dbReference>
<dbReference type="InterPro" id="IPR024937">
    <property type="entry name" value="Domain_X"/>
</dbReference>
<dbReference type="InterPro" id="IPR002866">
    <property type="entry name" value="Maturase_MatK"/>
</dbReference>
<dbReference type="InterPro" id="IPR024942">
    <property type="entry name" value="Maturase_MatK_N"/>
</dbReference>
<dbReference type="PANTHER" id="PTHR34811">
    <property type="entry name" value="MATURASE K"/>
    <property type="match status" value="1"/>
</dbReference>
<dbReference type="PANTHER" id="PTHR34811:SF1">
    <property type="entry name" value="MATURASE K"/>
    <property type="match status" value="1"/>
</dbReference>
<dbReference type="Pfam" id="PF01348">
    <property type="entry name" value="Intron_maturas2"/>
    <property type="match status" value="1"/>
</dbReference>
<dbReference type="Pfam" id="PF01824">
    <property type="entry name" value="MatK_N"/>
    <property type="match status" value="1"/>
</dbReference>
<evidence type="ECO:0000255" key="1">
    <source>
        <dbReference type="HAMAP-Rule" id="MF_01390"/>
    </source>
</evidence>